<evidence type="ECO:0000255" key="1">
    <source>
        <dbReference type="HAMAP-Rule" id="MF_00394"/>
    </source>
</evidence>
<reference key="1">
    <citation type="submission" date="2008-05" db="EMBL/GenBank/DDBJ databases">
        <title>Complete sequence of Rhodopseudomonas palustris TIE-1.</title>
        <authorList>
            <consortium name="US DOE Joint Genome Institute"/>
            <person name="Lucas S."/>
            <person name="Copeland A."/>
            <person name="Lapidus A."/>
            <person name="Glavina del Rio T."/>
            <person name="Dalin E."/>
            <person name="Tice H."/>
            <person name="Pitluck S."/>
            <person name="Chain P."/>
            <person name="Malfatti S."/>
            <person name="Shin M."/>
            <person name="Vergez L."/>
            <person name="Lang D."/>
            <person name="Schmutz J."/>
            <person name="Larimer F."/>
            <person name="Land M."/>
            <person name="Hauser L."/>
            <person name="Kyrpides N."/>
            <person name="Mikhailova N."/>
            <person name="Emerson D."/>
            <person name="Newman D.K."/>
            <person name="Roden E."/>
            <person name="Richardson P."/>
        </authorList>
    </citation>
    <scope>NUCLEOTIDE SEQUENCE [LARGE SCALE GENOMIC DNA]</scope>
    <source>
        <strain>TIE-1</strain>
    </source>
</reference>
<accession>B3Q866</accession>
<organism>
    <name type="scientific">Rhodopseudomonas palustris (strain TIE-1)</name>
    <dbReference type="NCBI Taxonomy" id="395960"/>
    <lineage>
        <taxon>Bacteria</taxon>
        <taxon>Pseudomonadati</taxon>
        <taxon>Pseudomonadota</taxon>
        <taxon>Alphaproteobacteria</taxon>
        <taxon>Hyphomicrobiales</taxon>
        <taxon>Nitrobacteraceae</taxon>
        <taxon>Rhodopseudomonas</taxon>
    </lineage>
</organism>
<comment type="function">
    <text evidence="1">Catalyzes the reduction of the glycolytic intermediate dihydroxyacetone phosphate (DHAP) to sn-glycerol 3-phosphate (G3P), the key precursor for phospholipid synthesis.</text>
</comment>
<comment type="catalytic activity">
    <reaction evidence="1">
        <text>sn-glycerol 3-phosphate + NAD(+) = dihydroxyacetone phosphate + NADH + H(+)</text>
        <dbReference type="Rhea" id="RHEA:11092"/>
        <dbReference type="ChEBI" id="CHEBI:15378"/>
        <dbReference type="ChEBI" id="CHEBI:57540"/>
        <dbReference type="ChEBI" id="CHEBI:57597"/>
        <dbReference type="ChEBI" id="CHEBI:57642"/>
        <dbReference type="ChEBI" id="CHEBI:57945"/>
        <dbReference type="EC" id="1.1.1.94"/>
    </reaction>
    <physiologicalReaction direction="right-to-left" evidence="1">
        <dbReference type="Rhea" id="RHEA:11094"/>
    </physiologicalReaction>
</comment>
<comment type="catalytic activity">
    <reaction evidence="1">
        <text>sn-glycerol 3-phosphate + NADP(+) = dihydroxyacetone phosphate + NADPH + H(+)</text>
        <dbReference type="Rhea" id="RHEA:11096"/>
        <dbReference type="ChEBI" id="CHEBI:15378"/>
        <dbReference type="ChEBI" id="CHEBI:57597"/>
        <dbReference type="ChEBI" id="CHEBI:57642"/>
        <dbReference type="ChEBI" id="CHEBI:57783"/>
        <dbReference type="ChEBI" id="CHEBI:58349"/>
        <dbReference type="EC" id="1.1.1.94"/>
    </reaction>
    <physiologicalReaction direction="right-to-left" evidence="1">
        <dbReference type="Rhea" id="RHEA:11098"/>
    </physiologicalReaction>
</comment>
<comment type="pathway">
    <text evidence="1">Membrane lipid metabolism; glycerophospholipid metabolism.</text>
</comment>
<comment type="subcellular location">
    <subcellularLocation>
        <location evidence="1">Cytoplasm</location>
    </subcellularLocation>
</comment>
<comment type="similarity">
    <text evidence="1">Belongs to the NAD-dependent glycerol-3-phosphate dehydrogenase family.</text>
</comment>
<proteinExistence type="inferred from homology"/>
<protein>
    <recommendedName>
        <fullName evidence="1">Glycerol-3-phosphate dehydrogenase [NAD(P)+]</fullName>
        <ecNumber evidence="1">1.1.1.94</ecNumber>
    </recommendedName>
    <alternativeName>
        <fullName evidence="1">NAD(P)(+)-dependent glycerol-3-phosphate dehydrogenase</fullName>
    </alternativeName>
    <alternativeName>
        <fullName evidence="1">NAD(P)H-dependent dihydroxyacetone-phosphate reductase</fullName>
    </alternativeName>
</protein>
<dbReference type="EC" id="1.1.1.94" evidence="1"/>
<dbReference type="EMBL" id="CP001096">
    <property type="protein sequence ID" value="ACE98815.1"/>
    <property type="molecule type" value="Genomic_DNA"/>
</dbReference>
<dbReference type="RefSeq" id="WP_012494017.1">
    <property type="nucleotide sequence ID" value="NC_011004.1"/>
</dbReference>
<dbReference type="SMR" id="B3Q866"/>
<dbReference type="KEGG" id="rpt:Rpal_0255"/>
<dbReference type="HOGENOM" id="CLU_033449_0_2_5"/>
<dbReference type="OrthoDB" id="9812273at2"/>
<dbReference type="UniPathway" id="UPA00940"/>
<dbReference type="Proteomes" id="UP000001725">
    <property type="component" value="Chromosome"/>
</dbReference>
<dbReference type="GO" id="GO:0005829">
    <property type="term" value="C:cytosol"/>
    <property type="evidence" value="ECO:0007669"/>
    <property type="project" value="TreeGrafter"/>
</dbReference>
<dbReference type="GO" id="GO:0047952">
    <property type="term" value="F:glycerol-3-phosphate dehydrogenase [NAD(P)+] activity"/>
    <property type="evidence" value="ECO:0007669"/>
    <property type="project" value="UniProtKB-UniRule"/>
</dbReference>
<dbReference type="GO" id="GO:0051287">
    <property type="term" value="F:NAD binding"/>
    <property type="evidence" value="ECO:0007669"/>
    <property type="project" value="InterPro"/>
</dbReference>
<dbReference type="GO" id="GO:0005975">
    <property type="term" value="P:carbohydrate metabolic process"/>
    <property type="evidence" value="ECO:0007669"/>
    <property type="project" value="InterPro"/>
</dbReference>
<dbReference type="GO" id="GO:0046167">
    <property type="term" value="P:glycerol-3-phosphate biosynthetic process"/>
    <property type="evidence" value="ECO:0007669"/>
    <property type="project" value="UniProtKB-UniRule"/>
</dbReference>
<dbReference type="GO" id="GO:0046168">
    <property type="term" value="P:glycerol-3-phosphate catabolic process"/>
    <property type="evidence" value="ECO:0007669"/>
    <property type="project" value="InterPro"/>
</dbReference>
<dbReference type="GO" id="GO:0006650">
    <property type="term" value="P:glycerophospholipid metabolic process"/>
    <property type="evidence" value="ECO:0007669"/>
    <property type="project" value="UniProtKB-UniRule"/>
</dbReference>
<dbReference type="GO" id="GO:0008654">
    <property type="term" value="P:phospholipid biosynthetic process"/>
    <property type="evidence" value="ECO:0007669"/>
    <property type="project" value="UniProtKB-KW"/>
</dbReference>
<dbReference type="FunFam" id="3.40.50.720:FF:000019">
    <property type="entry name" value="Glycerol-3-phosphate dehydrogenase [NAD(P)+]"/>
    <property type="match status" value="1"/>
</dbReference>
<dbReference type="Gene3D" id="1.10.1040.10">
    <property type="entry name" value="N-(1-d-carboxylethyl)-l-norvaline Dehydrogenase, domain 2"/>
    <property type="match status" value="1"/>
</dbReference>
<dbReference type="Gene3D" id="3.40.50.720">
    <property type="entry name" value="NAD(P)-binding Rossmann-like Domain"/>
    <property type="match status" value="1"/>
</dbReference>
<dbReference type="HAMAP" id="MF_00394">
    <property type="entry name" value="NAD_Glyc3P_dehydrog"/>
    <property type="match status" value="1"/>
</dbReference>
<dbReference type="InterPro" id="IPR008927">
    <property type="entry name" value="6-PGluconate_DH-like_C_sf"/>
</dbReference>
<dbReference type="InterPro" id="IPR013328">
    <property type="entry name" value="6PGD_dom2"/>
</dbReference>
<dbReference type="InterPro" id="IPR006168">
    <property type="entry name" value="G3P_DH_NAD-dep"/>
</dbReference>
<dbReference type="InterPro" id="IPR006109">
    <property type="entry name" value="G3P_DH_NAD-dep_C"/>
</dbReference>
<dbReference type="InterPro" id="IPR011128">
    <property type="entry name" value="G3P_DH_NAD-dep_N"/>
</dbReference>
<dbReference type="InterPro" id="IPR036291">
    <property type="entry name" value="NAD(P)-bd_dom_sf"/>
</dbReference>
<dbReference type="NCBIfam" id="NF000940">
    <property type="entry name" value="PRK00094.1-2"/>
    <property type="match status" value="1"/>
</dbReference>
<dbReference type="NCBIfam" id="NF000942">
    <property type="entry name" value="PRK00094.1-4"/>
    <property type="match status" value="1"/>
</dbReference>
<dbReference type="PANTHER" id="PTHR11728">
    <property type="entry name" value="GLYCEROL-3-PHOSPHATE DEHYDROGENASE"/>
    <property type="match status" value="1"/>
</dbReference>
<dbReference type="PANTHER" id="PTHR11728:SF1">
    <property type="entry name" value="GLYCEROL-3-PHOSPHATE DEHYDROGENASE [NAD(+)] 2, CHLOROPLASTIC"/>
    <property type="match status" value="1"/>
</dbReference>
<dbReference type="Pfam" id="PF07479">
    <property type="entry name" value="NAD_Gly3P_dh_C"/>
    <property type="match status" value="1"/>
</dbReference>
<dbReference type="Pfam" id="PF01210">
    <property type="entry name" value="NAD_Gly3P_dh_N"/>
    <property type="match status" value="1"/>
</dbReference>
<dbReference type="PIRSF" id="PIRSF000114">
    <property type="entry name" value="Glycerol-3-P_dh"/>
    <property type="match status" value="1"/>
</dbReference>
<dbReference type="PRINTS" id="PR00077">
    <property type="entry name" value="GPDHDRGNASE"/>
</dbReference>
<dbReference type="SUPFAM" id="SSF48179">
    <property type="entry name" value="6-phosphogluconate dehydrogenase C-terminal domain-like"/>
    <property type="match status" value="1"/>
</dbReference>
<dbReference type="SUPFAM" id="SSF51735">
    <property type="entry name" value="NAD(P)-binding Rossmann-fold domains"/>
    <property type="match status" value="1"/>
</dbReference>
<dbReference type="PROSITE" id="PS00957">
    <property type="entry name" value="NAD_G3PDH"/>
    <property type="match status" value="1"/>
</dbReference>
<sequence length="329" mass="33809">MGSLNSIAVLGGGAWGTALAQTAARAGRKVTLWEHDAGNAEHLIAARESRFLPGVRLEPSIQVTRDLAEAARADALLLVVPAQVLRQVVTSLQPLIAPRTPLVACAKGIEHGTHRFMTEIIAEAAPAAIPAILSGPSFAADVARGLPTAVTIAATDAACAQALAQAMNSGSFRPYHSTDVRGVELGGATKNVLAIAAGIVEGRQLGASALAAMTTRGFVELVRFGKAYGARIETMHGLSGLGDLTMCCSTPQSRNFSFGMALGRGEGIESAAHGKLAEGYYTAPVLLEMAQAKGIDMPISTAVAAVLGGKLSVDAAIEGLLTRPLKAEE</sequence>
<keyword id="KW-0963">Cytoplasm</keyword>
<keyword id="KW-0444">Lipid biosynthesis</keyword>
<keyword id="KW-0443">Lipid metabolism</keyword>
<keyword id="KW-0520">NAD</keyword>
<keyword id="KW-0521">NADP</keyword>
<keyword id="KW-0547">Nucleotide-binding</keyword>
<keyword id="KW-0560">Oxidoreductase</keyword>
<keyword id="KW-0594">Phospholipid biosynthesis</keyword>
<keyword id="KW-1208">Phospholipid metabolism</keyword>
<feature type="chain" id="PRO_1000123178" description="Glycerol-3-phosphate dehydrogenase [NAD(P)+]">
    <location>
        <begin position="1"/>
        <end position="329"/>
    </location>
</feature>
<feature type="active site" description="Proton acceptor" evidence="1">
    <location>
        <position position="190"/>
    </location>
</feature>
<feature type="binding site" evidence="1">
    <location>
        <position position="15"/>
    </location>
    <ligand>
        <name>NADPH</name>
        <dbReference type="ChEBI" id="CHEBI:57783"/>
    </ligand>
</feature>
<feature type="binding site" evidence="1">
    <location>
        <position position="35"/>
    </location>
    <ligand>
        <name>NADPH</name>
        <dbReference type="ChEBI" id="CHEBI:57783"/>
    </ligand>
</feature>
<feature type="binding site" evidence="1">
    <location>
        <position position="107"/>
    </location>
    <ligand>
        <name>NADPH</name>
        <dbReference type="ChEBI" id="CHEBI:57783"/>
    </ligand>
</feature>
<feature type="binding site" evidence="1">
    <location>
        <position position="107"/>
    </location>
    <ligand>
        <name>sn-glycerol 3-phosphate</name>
        <dbReference type="ChEBI" id="CHEBI:57597"/>
    </ligand>
</feature>
<feature type="binding site" evidence="1">
    <location>
        <position position="135"/>
    </location>
    <ligand>
        <name>sn-glycerol 3-phosphate</name>
        <dbReference type="ChEBI" id="CHEBI:57597"/>
    </ligand>
</feature>
<feature type="binding site" evidence="1">
    <location>
        <position position="137"/>
    </location>
    <ligand>
        <name>sn-glycerol 3-phosphate</name>
        <dbReference type="ChEBI" id="CHEBI:57597"/>
    </ligand>
</feature>
<feature type="binding site" evidence="1">
    <location>
        <position position="139"/>
    </location>
    <ligand>
        <name>NADPH</name>
        <dbReference type="ChEBI" id="CHEBI:57783"/>
    </ligand>
</feature>
<feature type="binding site" evidence="1">
    <location>
        <position position="190"/>
    </location>
    <ligand>
        <name>sn-glycerol 3-phosphate</name>
        <dbReference type="ChEBI" id="CHEBI:57597"/>
    </ligand>
</feature>
<feature type="binding site" evidence="1">
    <location>
        <position position="243"/>
    </location>
    <ligand>
        <name>sn-glycerol 3-phosphate</name>
        <dbReference type="ChEBI" id="CHEBI:57597"/>
    </ligand>
</feature>
<feature type="binding site" evidence="1">
    <location>
        <position position="253"/>
    </location>
    <ligand>
        <name>sn-glycerol 3-phosphate</name>
        <dbReference type="ChEBI" id="CHEBI:57597"/>
    </ligand>
</feature>
<feature type="binding site" evidence="1">
    <location>
        <position position="254"/>
    </location>
    <ligand>
        <name>NADPH</name>
        <dbReference type="ChEBI" id="CHEBI:57783"/>
    </ligand>
</feature>
<feature type="binding site" evidence="1">
    <location>
        <position position="254"/>
    </location>
    <ligand>
        <name>sn-glycerol 3-phosphate</name>
        <dbReference type="ChEBI" id="CHEBI:57597"/>
    </ligand>
</feature>
<feature type="binding site" evidence="1">
    <location>
        <position position="255"/>
    </location>
    <ligand>
        <name>sn-glycerol 3-phosphate</name>
        <dbReference type="ChEBI" id="CHEBI:57597"/>
    </ligand>
</feature>
<feature type="binding site" evidence="1">
    <location>
        <position position="276"/>
    </location>
    <ligand>
        <name>NADPH</name>
        <dbReference type="ChEBI" id="CHEBI:57783"/>
    </ligand>
</feature>
<feature type="binding site" evidence="1">
    <location>
        <position position="278"/>
    </location>
    <ligand>
        <name>NADPH</name>
        <dbReference type="ChEBI" id="CHEBI:57783"/>
    </ligand>
</feature>
<name>GPDA_RHOPT</name>
<gene>
    <name evidence="1" type="primary">gpsA</name>
    <name type="ordered locus">Rpal_0255</name>
</gene>